<organism>
    <name type="scientific">Maricaulis maris (strain MCS10)</name>
    <name type="common">Caulobacter maris</name>
    <dbReference type="NCBI Taxonomy" id="394221"/>
    <lineage>
        <taxon>Bacteria</taxon>
        <taxon>Pseudomonadati</taxon>
        <taxon>Pseudomonadota</taxon>
        <taxon>Alphaproteobacteria</taxon>
        <taxon>Maricaulales</taxon>
        <taxon>Maricaulaceae</taxon>
        <taxon>Maricaulis</taxon>
    </lineage>
</organism>
<evidence type="ECO:0000255" key="1">
    <source>
        <dbReference type="HAMAP-Rule" id="MF_01343"/>
    </source>
</evidence>
<evidence type="ECO:0000256" key="2">
    <source>
        <dbReference type="SAM" id="MobiDB-lite"/>
    </source>
</evidence>
<evidence type="ECO:0000305" key="3"/>
<name>RS15_MARMM</name>
<keyword id="KW-1185">Reference proteome</keyword>
<keyword id="KW-0687">Ribonucleoprotein</keyword>
<keyword id="KW-0689">Ribosomal protein</keyword>
<keyword id="KW-0694">RNA-binding</keyword>
<keyword id="KW-0699">rRNA-binding</keyword>
<proteinExistence type="inferred from homology"/>
<accession>Q0AK63</accession>
<comment type="function">
    <text evidence="1">One of the primary rRNA binding proteins, it binds directly to 16S rRNA where it helps nucleate assembly of the platform of the 30S subunit by binding and bridging several RNA helices of the 16S rRNA.</text>
</comment>
<comment type="function">
    <text evidence="1">Forms an intersubunit bridge (bridge B4) with the 23S rRNA of the 50S subunit in the ribosome.</text>
</comment>
<comment type="subunit">
    <text evidence="1">Part of the 30S ribosomal subunit. Forms a bridge to the 50S subunit in the 70S ribosome, contacting the 23S rRNA.</text>
</comment>
<comment type="similarity">
    <text evidence="1">Belongs to the universal ribosomal protein uS15 family.</text>
</comment>
<feature type="chain" id="PRO_1000054809" description="Small ribosomal subunit protein uS15">
    <location>
        <begin position="1"/>
        <end position="89"/>
    </location>
</feature>
<feature type="region of interest" description="Disordered" evidence="2">
    <location>
        <begin position="1"/>
        <end position="24"/>
    </location>
</feature>
<feature type="compositionally biased region" description="Basic and acidic residues" evidence="2">
    <location>
        <begin position="1"/>
        <end position="20"/>
    </location>
</feature>
<reference key="1">
    <citation type="submission" date="2006-08" db="EMBL/GenBank/DDBJ databases">
        <title>Complete sequence of Maricaulis maris MCS10.</title>
        <authorList>
            <consortium name="US DOE Joint Genome Institute"/>
            <person name="Copeland A."/>
            <person name="Lucas S."/>
            <person name="Lapidus A."/>
            <person name="Barry K."/>
            <person name="Detter J.C."/>
            <person name="Glavina del Rio T."/>
            <person name="Hammon N."/>
            <person name="Israni S."/>
            <person name="Dalin E."/>
            <person name="Tice H."/>
            <person name="Pitluck S."/>
            <person name="Saunders E."/>
            <person name="Brettin T."/>
            <person name="Bruce D."/>
            <person name="Han C."/>
            <person name="Tapia R."/>
            <person name="Gilna P."/>
            <person name="Schmutz J."/>
            <person name="Larimer F."/>
            <person name="Land M."/>
            <person name="Hauser L."/>
            <person name="Kyrpides N."/>
            <person name="Mikhailova N."/>
            <person name="Viollier P."/>
            <person name="Stephens C."/>
            <person name="Richardson P."/>
        </authorList>
    </citation>
    <scope>NUCLEOTIDE SEQUENCE [LARGE SCALE GENOMIC DNA]</scope>
    <source>
        <strain>MCS10</strain>
    </source>
</reference>
<gene>
    <name evidence="1" type="primary">rpsO</name>
    <name type="ordered locus">Mmar10_3049</name>
</gene>
<sequence>MSITQERKSALIAEHARGKTDTGSPEVQVAILTTRIANLTEHFKTHKKDNHSRRGLLKMVSQRRRLLDYVKNKDVARYQAIIEKLGLRR</sequence>
<dbReference type="EMBL" id="CP000449">
    <property type="protein sequence ID" value="ABI67330.1"/>
    <property type="molecule type" value="Genomic_DNA"/>
</dbReference>
<dbReference type="RefSeq" id="WP_011644974.1">
    <property type="nucleotide sequence ID" value="NC_008347.1"/>
</dbReference>
<dbReference type="SMR" id="Q0AK63"/>
<dbReference type="STRING" id="394221.Mmar10_3049"/>
<dbReference type="KEGG" id="mmr:Mmar10_3049"/>
<dbReference type="eggNOG" id="COG0184">
    <property type="taxonomic scope" value="Bacteria"/>
</dbReference>
<dbReference type="HOGENOM" id="CLU_148518_0_0_5"/>
<dbReference type="OrthoDB" id="9799262at2"/>
<dbReference type="Proteomes" id="UP000001964">
    <property type="component" value="Chromosome"/>
</dbReference>
<dbReference type="GO" id="GO:0022627">
    <property type="term" value="C:cytosolic small ribosomal subunit"/>
    <property type="evidence" value="ECO:0007669"/>
    <property type="project" value="TreeGrafter"/>
</dbReference>
<dbReference type="GO" id="GO:0019843">
    <property type="term" value="F:rRNA binding"/>
    <property type="evidence" value="ECO:0007669"/>
    <property type="project" value="UniProtKB-UniRule"/>
</dbReference>
<dbReference type="GO" id="GO:0003735">
    <property type="term" value="F:structural constituent of ribosome"/>
    <property type="evidence" value="ECO:0007669"/>
    <property type="project" value="InterPro"/>
</dbReference>
<dbReference type="GO" id="GO:0006412">
    <property type="term" value="P:translation"/>
    <property type="evidence" value="ECO:0007669"/>
    <property type="project" value="UniProtKB-UniRule"/>
</dbReference>
<dbReference type="CDD" id="cd00353">
    <property type="entry name" value="Ribosomal_S15p_S13e"/>
    <property type="match status" value="1"/>
</dbReference>
<dbReference type="FunFam" id="1.10.287.10:FF:000002">
    <property type="entry name" value="30S ribosomal protein S15"/>
    <property type="match status" value="1"/>
</dbReference>
<dbReference type="Gene3D" id="6.10.250.3130">
    <property type="match status" value="1"/>
</dbReference>
<dbReference type="Gene3D" id="1.10.287.10">
    <property type="entry name" value="S15/NS1, RNA-binding"/>
    <property type="match status" value="1"/>
</dbReference>
<dbReference type="HAMAP" id="MF_01343_B">
    <property type="entry name" value="Ribosomal_uS15_B"/>
    <property type="match status" value="1"/>
</dbReference>
<dbReference type="InterPro" id="IPR000589">
    <property type="entry name" value="Ribosomal_uS15"/>
</dbReference>
<dbReference type="InterPro" id="IPR005290">
    <property type="entry name" value="Ribosomal_uS15_bac-type"/>
</dbReference>
<dbReference type="InterPro" id="IPR009068">
    <property type="entry name" value="uS15_NS1_RNA-bd_sf"/>
</dbReference>
<dbReference type="NCBIfam" id="TIGR00952">
    <property type="entry name" value="S15_bact"/>
    <property type="match status" value="1"/>
</dbReference>
<dbReference type="PANTHER" id="PTHR23321">
    <property type="entry name" value="RIBOSOMAL PROTEIN S15, BACTERIAL AND ORGANELLAR"/>
    <property type="match status" value="1"/>
</dbReference>
<dbReference type="PANTHER" id="PTHR23321:SF26">
    <property type="entry name" value="SMALL RIBOSOMAL SUBUNIT PROTEIN US15M"/>
    <property type="match status" value="1"/>
</dbReference>
<dbReference type="Pfam" id="PF00312">
    <property type="entry name" value="Ribosomal_S15"/>
    <property type="match status" value="1"/>
</dbReference>
<dbReference type="SMART" id="SM01387">
    <property type="entry name" value="Ribosomal_S15"/>
    <property type="match status" value="1"/>
</dbReference>
<dbReference type="SUPFAM" id="SSF47060">
    <property type="entry name" value="S15/NS1 RNA-binding domain"/>
    <property type="match status" value="1"/>
</dbReference>
<dbReference type="PROSITE" id="PS00362">
    <property type="entry name" value="RIBOSOMAL_S15"/>
    <property type="match status" value="1"/>
</dbReference>
<protein>
    <recommendedName>
        <fullName evidence="1">Small ribosomal subunit protein uS15</fullName>
    </recommendedName>
    <alternativeName>
        <fullName evidence="3">30S ribosomal protein S15</fullName>
    </alternativeName>
</protein>